<organism>
    <name type="scientific">Trichodesmium erythraeum (strain IMS101)</name>
    <dbReference type="NCBI Taxonomy" id="203124"/>
    <lineage>
        <taxon>Bacteria</taxon>
        <taxon>Bacillati</taxon>
        <taxon>Cyanobacteriota</taxon>
        <taxon>Cyanophyceae</taxon>
        <taxon>Oscillatoriophycideae</taxon>
        <taxon>Oscillatoriales</taxon>
        <taxon>Microcoleaceae</taxon>
        <taxon>Trichodesmium</taxon>
    </lineage>
</organism>
<evidence type="ECO:0000255" key="1">
    <source>
        <dbReference type="HAMAP-Rule" id="MF_01325"/>
    </source>
</evidence>
<evidence type="ECO:0000256" key="2">
    <source>
        <dbReference type="SAM" id="MobiDB-lite"/>
    </source>
</evidence>
<evidence type="ECO:0000305" key="3"/>
<accession>Q110A7</accession>
<reference key="1">
    <citation type="journal article" date="2015" name="Proc. Natl. Acad. Sci. U.S.A.">
        <title>Trichodesmium genome maintains abundant, widespread noncoding DNA in situ, despite oligotrophic lifestyle.</title>
        <authorList>
            <person name="Walworth N."/>
            <person name="Pfreundt U."/>
            <person name="Nelson W.C."/>
            <person name="Mincer T."/>
            <person name="Heidelberg J.F."/>
            <person name="Fu F."/>
            <person name="Waterbury J.B."/>
            <person name="Glavina del Rio T."/>
            <person name="Goodwin L."/>
            <person name="Kyrpides N.C."/>
            <person name="Land M.L."/>
            <person name="Woyke T."/>
            <person name="Hutchins D.A."/>
            <person name="Hess W.R."/>
            <person name="Webb E.A."/>
        </authorList>
    </citation>
    <scope>NUCLEOTIDE SEQUENCE [LARGE SCALE GENOMIC DNA]</scope>
    <source>
        <strain>IMS101</strain>
    </source>
</reference>
<name>RL3_TRIEI</name>
<protein>
    <recommendedName>
        <fullName evidence="1">Large ribosomal subunit protein uL3</fullName>
    </recommendedName>
    <alternativeName>
        <fullName evidence="3">50S ribosomal protein L3</fullName>
    </alternativeName>
</protein>
<comment type="function">
    <text evidence="1">One of the primary rRNA binding proteins, it binds directly near the 3'-end of the 23S rRNA, where it nucleates assembly of the 50S subunit.</text>
</comment>
<comment type="subunit">
    <text evidence="1">Part of the 50S ribosomal subunit. Forms a cluster with proteins L14 and L19.</text>
</comment>
<comment type="similarity">
    <text evidence="1">Belongs to the universal ribosomal protein uL3 family.</text>
</comment>
<keyword id="KW-0687">Ribonucleoprotein</keyword>
<keyword id="KW-0689">Ribosomal protein</keyword>
<keyword id="KW-0694">RNA-binding</keyword>
<keyword id="KW-0699">rRNA-binding</keyword>
<feature type="chain" id="PRO_1000052163" description="Large ribosomal subunit protein uL3">
    <location>
        <begin position="1"/>
        <end position="227"/>
    </location>
</feature>
<feature type="region of interest" description="Disordered" evidence="2">
    <location>
        <begin position="144"/>
        <end position="166"/>
    </location>
</feature>
<proteinExistence type="inferred from homology"/>
<sequence length="227" mass="24545">MVVGILGTKLGMTQVFEAETGKAIPVTVVEAGPCVVTQIKTEQTDGYTAVQIGYGEAKNKTRQLNTKEPKEVNRYLTNAQEGHLVKSGGTPLRYLREYRVDNTGNFELGQQIKVDLFEAGQLVDVTGKSIGKGFAGYQKRHNFRRGPMAHGSKNHRLPGSTGPGTTPGRVYPGKKMAGHLGNVRVTTRKLKIVRIDPERNLLLIKGSIPGKSGTLISIAPANIVGQK</sequence>
<dbReference type="EMBL" id="CP000393">
    <property type="protein sequence ID" value="ABG52167.1"/>
    <property type="molecule type" value="Genomic_DNA"/>
</dbReference>
<dbReference type="RefSeq" id="WP_011612522.1">
    <property type="nucleotide sequence ID" value="NC_008312.1"/>
</dbReference>
<dbReference type="SMR" id="Q110A7"/>
<dbReference type="STRING" id="203124.Tery_3012"/>
<dbReference type="KEGG" id="ter:Tery_3012"/>
<dbReference type="eggNOG" id="COG0087">
    <property type="taxonomic scope" value="Bacteria"/>
</dbReference>
<dbReference type="HOGENOM" id="CLU_044142_4_1_3"/>
<dbReference type="OrthoDB" id="9806135at2"/>
<dbReference type="GO" id="GO:0022625">
    <property type="term" value="C:cytosolic large ribosomal subunit"/>
    <property type="evidence" value="ECO:0007669"/>
    <property type="project" value="TreeGrafter"/>
</dbReference>
<dbReference type="GO" id="GO:0019843">
    <property type="term" value="F:rRNA binding"/>
    <property type="evidence" value="ECO:0007669"/>
    <property type="project" value="UniProtKB-UniRule"/>
</dbReference>
<dbReference type="GO" id="GO:0003735">
    <property type="term" value="F:structural constituent of ribosome"/>
    <property type="evidence" value="ECO:0007669"/>
    <property type="project" value="InterPro"/>
</dbReference>
<dbReference type="GO" id="GO:0006412">
    <property type="term" value="P:translation"/>
    <property type="evidence" value="ECO:0007669"/>
    <property type="project" value="UniProtKB-UniRule"/>
</dbReference>
<dbReference type="FunFam" id="2.40.30.10:FF:000065">
    <property type="entry name" value="50S ribosomal protein L3, chloroplastic"/>
    <property type="match status" value="1"/>
</dbReference>
<dbReference type="Gene3D" id="3.30.160.810">
    <property type="match status" value="1"/>
</dbReference>
<dbReference type="Gene3D" id="2.40.30.10">
    <property type="entry name" value="Translation factors"/>
    <property type="match status" value="1"/>
</dbReference>
<dbReference type="HAMAP" id="MF_01325_B">
    <property type="entry name" value="Ribosomal_uL3_B"/>
    <property type="match status" value="1"/>
</dbReference>
<dbReference type="InterPro" id="IPR000597">
    <property type="entry name" value="Ribosomal_uL3"/>
</dbReference>
<dbReference type="InterPro" id="IPR019927">
    <property type="entry name" value="Ribosomal_uL3_bac/org-type"/>
</dbReference>
<dbReference type="InterPro" id="IPR019926">
    <property type="entry name" value="Ribosomal_uL3_CS"/>
</dbReference>
<dbReference type="InterPro" id="IPR009000">
    <property type="entry name" value="Transl_B-barrel_sf"/>
</dbReference>
<dbReference type="NCBIfam" id="TIGR03625">
    <property type="entry name" value="L3_bact"/>
    <property type="match status" value="1"/>
</dbReference>
<dbReference type="PANTHER" id="PTHR11229">
    <property type="entry name" value="50S RIBOSOMAL PROTEIN L3"/>
    <property type="match status" value="1"/>
</dbReference>
<dbReference type="PANTHER" id="PTHR11229:SF16">
    <property type="entry name" value="LARGE RIBOSOMAL SUBUNIT PROTEIN UL3C"/>
    <property type="match status" value="1"/>
</dbReference>
<dbReference type="Pfam" id="PF00297">
    <property type="entry name" value="Ribosomal_L3"/>
    <property type="match status" value="1"/>
</dbReference>
<dbReference type="SUPFAM" id="SSF50447">
    <property type="entry name" value="Translation proteins"/>
    <property type="match status" value="1"/>
</dbReference>
<dbReference type="PROSITE" id="PS00474">
    <property type="entry name" value="RIBOSOMAL_L3"/>
    <property type="match status" value="1"/>
</dbReference>
<gene>
    <name evidence="1" type="primary">rplC</name>
    <name evidence="1" type="synonym">rpl3</name>
    <name type="ordered locus">Tery_3012</name>
</gene>